<dbReference type="EC" id="2.4.99.18"/>
<dbReference type="EMBL" id="FO080619">
    <property type="protein sequence ID" value="CCD65209.1"/>
    <property type="molecule type" value="Genomic_DNA"/>
</dbReference>
<dbReference type="PIR" id="T34351">
    <property type="entry name" value="T34351"/>
</dbReference>
<dbReference type="RefSeq" id="NP_498362.1">
    <property type="nucleotide sequence ID" value="NM_065961.6"/>
</dbReference>
<dbReference type="SMR" id="P46975"/>
<dbReference type="BioGRID" id="41106">
    <property type="interactions" value="19"/>
</dbReference>
<dbReference type="ComplexPortal" id="CPX-968">
    <property type="entry name" value="Oligosaccharyltransferase complex"/>
</dbReference>
<dbReference type="DIP" id="DIP-24951N"/>
<dbReference type="FunCoup" id="P46975">
    <property type="interactions" value="3338"/>
</dbReference>
<dbReference type="STRING" id="6239.T12A2.2.1"/>
<dbReference type="CAZy" id="GT66">
    <property type="family name" value="Glycosyltransferase Family 66"/>
</dbReference>
<dbReference type="GlyCosmos" id="P46975">
    <property type="glycosylation" value="4 sites, No reported glycans"/>
</dbReference>
<dbReference type="iPTMnet" id="P46975"/>
<dbReference type="PaxDb" id="6239-T12A2.2.3"/>
<dbReference type="PeptideAtlas" id="P46975"/>
<dbReference type="EnsemblMetazoa" id="T12A2.2.1">
    <property type="protein sequence ID" value="T12A2.2.1"/>
    <property type="gene ID" value="WBGene00020437"/>
</dbReference>
<dbReference type="EnsemblMetazoa" id="T12A2.2.2">
    <property type="protein sequence ID" value="T12A2.2.2"/>
    <property type="gene ID" value="WBGene00020437"/>
</dbReference>
<dbReference type="GeneID" id="175886"/>
<dbReference type="KEGG" id="cel:CELE_T12A2.2"/>
<dbReference type="UCSC" id="T12A2.2.2">
    <property type="organism name" value="c. elegans"/>
</dbReference>
<dbReference type="AGR" id="WB:WBGene00020437"/>
<dbReference type="CTD" id="175886"/>
<dbReference type="WormBase" id="T12A2.2">
    <property type="protein sequence ID" value="CE01395"/>
    <property type="gene ID" value="WBGene00020437"/>
    <property type="gene designation" value="stt-3"/>
</dbReference>
<dbReference type="eggNOG" id="KOG2292">
    <property type="taxonomic scope" value="Eukaryota"/>
</dbReference>
<dbReference type="GeneTree" id="ENSGT00940000155488"/>
<dbReference type="HOGENOM" id="CLU_009279_1_0_1"/>
<dbReference type="InParanoid" id="P46975"/>
<dbReference type="OMA" id="TKELWSP"/>
<dbReference type="OrthoDB" id="10261066at2759"/>
<dbReference type="PhylomeDB" id="P46975"/>
<dbReference type="UniPathway" id="UPA00378"/>
<dbReference type="PRO" id="PR:P46975"/>
<dbReference type="Proteomes" id="UP000001940">
    <property type="component" value="Chromosome III"/>
</dbReference>
<dbReference type="Bgee" id="WBGene00020437">
    <property type="expression patterns" value="Expressed in embryo and 4 other cell types or tissues"/>
</dbReference>
<dbReference type="GO" id="GO:0008250">
    <property type="term" value="C:oligosaccharyltransferase complex"/>
    <property type="evidence" value="ECO:0000303"/>
    <property type="project" value="ComplexPortal"/>
</dbReference>
<dbReference type="GO" id="GO:0004579">
    <property type="term" value="F:dolichyl-diphosphooligosaccharide-protein glycotransferase activity"/>
    <property type="evidence" value="ECO:0000318"/>
    <property type="project" value="GO_Central"/>
</dbReference>
<dbReference type="GO" id="GO:0046872">
    <property type="term" value="F:metal ion binding"/>
    <property type="evidence" value="ECO:0007669"/>
    <property type="project" value="UniProtKB-KW"/>
</dbReference>
<dbReference type="GO" id="GO:0043687">
    <property type="term" value="P:post-translational protein modification"/>
    <property type="evidence" value="ECO:0000318"/>
    <property type="project" value="GO_Central"/>
</dbReference>
<dbReference type="GO" id="GO:0006487">
    <property type="term" value="P:protein N-linked glycosylation"/>
    <property type="evidence" value="ECO:0000303"/>
    <property type="project" value="ComplexPortal"/>
</dbReference>
<dbReference type="GO" id="GO:0018279">
    <property type="term" value="P:protein N-linked glycosylation via asparagine"/>
    <property type="evidence" value="ECO:0000318"/>
    <property type="project" value="GO_Central"/>
</dbReference>
<dbReference type="FunFam" id="3.40.50.12610:FF:000001">
    <property type="entry name" value="Dolichyl-diphosphooligosaccharide--protein glycosyltransferase subunit STT3B"/>
    <property type="match status" value="1"/>
</dbReference>
<dbReference type="Gene3D" id="3.40.50.12610">
    <property type="match status" value="1"/>
</dbReference>
<dbReference type="InterPro" id="IPR003674">
    <property type="entry name" value="Oligo_trans_STT3"/>
</dbReference>
<dbReference type="InterPro" id="IPR048999">
    <property type="entry name" value="STT3-PglB_core"/>
</dbReference>
<dbReference type="InterPro" id="IPR048307">
    <property type="entry name" value="STT3_N"/>
</dbReference>
<dbReference type="PANTHER" id="PTHR13872">
    <property type="entry name" value="DOLICHYL-DIPHOSPHOOLIGOSACCHARIDE--PROTEIN GLYCOSYLTRANSFERASE SUBUNIT"/>
    <property type="match status" value="1"/>
</dbReference>
<dbReference type="PANTHER" id="PTHR13872:SF1">
    <property type="entry name" value="DOLICHYL-DIPHOSPHOOLIGOSACCHARIDE--PROTEIN GLYCOSYLTRANSFERASE SUBUNIT STT3B"/>
    <property type="match status" value="1"/>
</dbReference>
<dbReference type="Pfam" id="PF02516">
    <property type="entry name" value="STT3"/>
    <property type="match status" value="1"/>
</dbReference>
<dbReference type="Pfam" id="PF21436">
    <property type="entry name" value="STT3-PglB_core"/>
    <property type="match status" value="1"/>
</dbReference>
<proteinExistence type="evidence at protein level"/>
<keyword id="KW-0256">Endoplasmic reticulum</keyword>
<keyword id="KW-0325">Glycoprotein</keyword>
<keyword id="KW-0328">Glycosyltransferase</keyword>
<keyword id="KW-0460">Magnesium</keyword>
<keyword id="KW-0464">Manganese</keyword>
<keyword id="KW-0472">Membrane</keyword>
<keyword id="KW-0479">Metal-binding</keyword>
<keyword id="KW-1185">Reference proteome</keyword>
<keyword id="KW-0808">Transferase</keyword>
<keyword id="KW-0812">Transmembrane</keyword>
<keyword id="KW-1133">Transmembrane helix</keyword>
<protein>
    <recommendedName>
        <fullName evidence="5">Dolichyl-diphosphooligosaccharide--protein glycosyltransferase subunit stt-3</fullName>
        <shortName evidence="5">Oligosaccharyl transferase subunit stt-3</shortName>
        <ecNumber>2.4.99.18</ecNumber>
    </recommendedName>
</protein>
<comment type="function">
    <text evidence="2">Catalytic subunit of the oligosaccharyl transferase (OST) complex that catalyzes the initial transfer of a defined glycan (Glc(3)Man(9)GlcNAc(2) in eukaryotes) from the lipid carrier dolichol-pyrophosphate to an asparagine residue within an Asn-X-Ser/Thr consensus motif in nascent polypeptide chains, the first step in protein N-glycosylation. N-glycosylation occurs cotranslationally and the complex associates with the Sec61 complex at the channel-forming translocon complex that mediates protein translocation across the endoplasmic reticulum (ER). All subunits are required for a maximal enzyme activity. This subunit contains the active site and the acceptor peptide and donor lipid-linked oligosaccharide (LLO) binding pockets.</text>
</comment>
<comment type="catalytic activity">
    <reaction evidence="2">
        <text>a di-trans,poly-cis-dolichyl diphosphooligosaccharide + L-asparaginyl-[protein] = N(4)-(oligosaccharide-(1-&gt;4)-N-acetyl-beta-D-glucosaminyl-(1-&gt;4)-N-acetyl-beta-D-glucosaminyl)-L-asparaginyl-[protein] + a di-trans,poly-cis-dolichyl diphosphate + H(+)</text>
        <dbReference type="Rhea" id="RHEA:22980"/>
        <dbReference type="Rhea" id="RHEA-COMP:12804"/>
        <dbReference type="Rhea" id="RHEA-COMP:12805"/>
        <dbReference type="Rhea" id="RHEA-COMP:19506"/>
        <dbReference type="Rhea" id="RHEA-COMP:19509"/>
        <dbReference type="ChEBI" id="CHEBI:15378"/>
        <dbReference type="ChEBI" id="CHEBI:50347"/>
        <dbReference type="ChEBI" id="CHEBI:57497"/>
        <dbReference type="ChEBI" id="CHEBI:57570"/>
        <dbReference type="ChEBI" id="CHEBI:132529"/>
        <dbReference type="EC" id="2.4.99.18"/>
    </reaction>
</comment>
<comment type="cofactor">
    <cofactor evidence="1">
        <name>Mg(2+)</name>
        <dbReference type="ChEBI" id="CHEBI:18420"/>
    </cofactor>
    <cofactor evidence="1">
        <name>Mn(2+)</name>
        <dbReference type="ChEBI" id="CHEBI:29035"/>
    </cofactor>
</comment>
<comment type="pathway">
    <text evidence="2">Protein modification; protein glycosylation.</text>
</comment>
<comment type="subunit">
    <text evidence="5">Component of the oligosaccharyltransferase (OST) complex.</text>
</comment>
<comment type="subcellular location">
    <subcellularLocation>
        <location evidence="3">Endoplasmic reticulum membrane</location>
        <topology evidence="2">Multi-pass membrane protein</topology>
    </subcellularLocation>
</comment>
<comment type="domain">
    <text evidence="2">Despite low primary sequence conservation between eukaryotic catalytic subunits and bacterial and archaeal single subunit OSTs (ssOST), structural comparison revealed several common motifs at spatially equivalent positions, like the DXD motif 1 on the external loop 1 and the DXD motif 2 on the external loop 2 involved in binding of the metal ion cofactor and the carboxamide group of the acceptor asparagine, the conserved Glu residue of the TIXE/SVSE motif on the external loop 5 involved in catalysis, as well as the WWDYG and the DK/MI motifs in the globular domain that define the binding pocket for the +2 Ser/Thr of the acceptor sequon. In bacterial ssOSTs, an Arg residue was found to interact with a negatively charged side chain at the -2 position of the sequon. This Arg is conserved in bacterial enzymes and correlates with an extended sequon requirement (Asp-X-Asn-X-Ser/Thr) for bacterial N-glycosylation.</text>
</comment>
<comment type="disruption phenotype">
    <text evidence="11">RNAi-mediated knock-down is mostly embryonic lethal. Embryogenesis proceeds more slowly and embryos are osmo-sensitive.</text>
</comment>
<comment type="similarity">
    <text evidence="12">Belongs to the STT3 family.</text>
</comment>
<evidence type="ECO:0000250" key="1">
    <source>
        <dbReference type="UniProtKB" id="B9KDD4"/>
    </source>
</evidence>
<evidence type="ECO:0000250" key="2">
    <source>
        <dbReference type="UniProtKB" id="P39007"/>
    </source>
</evidence>
<evidence type="ECO:0000250" key="3">
    <source>
        <dbReference type="UniProtKB" id="P46978"/>
    </source>
</evidence>
<evidence type="ECO:0000250" key="4">
    <source>
        <dbReference type="UniProtKB" id="Q5HTX9"/>
    </source>
</evidence>
<evidence type="ECO:0000250" key="5">
    <source>
        <dbReference type="UniProtKB" id="Q8TCJ2"/>
    </source>
</evidence>
<evidence type="ECO:0000255" key="6"/>
<evidence type="ECO:0000255" key="7">
    <source>
        <dbReference type="PROSITE-ProRule" id="PRU00498"/>
    </source>
</evidence>
<evidence type="ECO:0000256" key="8">
    <source>
        <dbReference type="SAM" id="MobiDB-lite"/>
    </source>
</evidence>
<evidence type="ECO:0000269" key="9">
    <source>
    </source>
</evidence>
<evidence type="ECO:0000269" key="10">
    <source>
    </source>
</evidence>
<evidence type="ECO:0000269" key="11">
    <source>
    </source>
</evidence>
<evidence type="ECO:0000305" key="12"/>
<evidence type="ECO:0000312" key="13">
    <source>
        <dbReference type="WormBase" id="T12A2.2"/>
    </source>
</evidence>
<name>STT3_CAEEL</name>
<accession>P46975</accession>
<gene>
    <name evidence="13" type="primary">stt-3</name>
    <name evidence="13" type="ORF">T12A2.2</name>
</gene>
<organism>
    <name type="scientific">Caenorhabditis elegans</name>
    <dbReference type="NCBI Taxonomy" id="6239"/>
    <lineage>
        <taxon>Eukaryota</taxon>
        <taxon>Metazoa</taxon>
        <taxon>Ecdysozoa</taxon>
        <taxon>Nematoda</taxon>
        <taxon>Chromadorea</taxon>
        <taxon>Rhabditida</taxon>
        <taxon>Rhabditina</taxon>
        <taxon>Rhabditomorpha</taxon>
        <taxon>Rhabditoidea</taxon>
        <taxon>Rhabditidae</taxon>
        <taxon>Peloderinae</taxon>
        <taxon>Caenorhabditis</taxon>
    </lineage>
</organism>
<reference key="1">
    <citation type="journal article" date="1998" name="Science">
        <title>Genome sequence of the nematode C. elegans: a platform for investigating biology.</title>
        <authorList>
            <consortium name="The C. elegans sequencing consortium"/>
        </authorList>
    </citation>
    <scope>NUCLEOTIDE SEQUENCE [LARGE SCALE GENOMIC DNA]</scope>
    <source>
        <strain>Bristol N2</strain>
    </source>
</reference>
<reference key="2">
    <citation type="journal article" date="2005" name="Glycobiology">
        <title>Identification of the hydrophobic glycoproteins of Caenorhabditis elegans.</title>
        <authorList>
            <person name="Fan X."/>
            <person name="She Y.-M."/>
            <person name="Bagshaw R.D."/>
            <person name="Callahan J.W."/>
            <person name="Schachter H."/>
            <person name="Mahuran D.J."/>
        </authorList>
    </citation>
    <scope>GLYCOSYLATION [LARGE SCALE ANALYSIS] AT ASN-559 AND ASN-570</scope>
    <scope>IDENTIFICATION BY MASS SPECTROMETRY</scope>
</reference>
<reference key="3">
    <citation type="journal article" date="2007" name="Mol. Cell. Proteomics">
        <title>Proteomics reveals N-linked glycoprotein diversity in Caenorhabditis elegans and suggests an atypical translocation mechanism for integral membrane proteins.</title>
        <authorList>
            <person name="Kaji H."/>
            <person name="Kamiie J."/>
            <person name="Kawakami H."/>
            <person name="Kido K."/>
            <person name="Yamauchi Y."/>
            <person name="Shinkawa T."/>
            <person name="Taoka M."/>
            <person name="Takahashi N."/>
            <person name="Isobe T."/>
        </authorList>
    </citation>
    <scope>GLYCOSYLATION [LARGE SCALE ANALYSIS] AT ASN-559 AND ASN-570</scope>
    <scope>IDENTIFICATION BY MASS SPECTROMETRY</scope>
    <source>
        <strain>Bristol N2</strain>
    </source>
</reference>
<reference key="4">
    <citation type="journal article" date="2013" name="PLoS ONE">
        <title>N-glycosylation is required for secretion and mitosis in C. elegans.</title>
        <authorList>
            <person name="Stevens J."/>
            <person name="Spang A."/>
        </authorList>
    </citation>
    <scope>DISRUPTION PHENOTYPE</scope>
</reference>
<feature type="chain" id="PRO_0000072289" description="Dolichyl-diphosphooligosaccharide--protein glycosyltransferase subunit stt-3">
    <location>
        <begin position="1"/>
        <end position="757"/>
    </location>
</feature>
<feature type="topological domain" description="Cytoplasmic" evidence="12">
    <location>
        <begin position="1"/>
        <end position="13"/>
    </location>
</feature>
<feature type="transmembrane region" description="Helical" evidence="6">
    <location>
        <begin position="14"/>
        <end position="34"/>
    </location>
</feature>
<feature type="topological domain" description="Lumenal" evidence="12">
    <location>
        <begin position="35"/>
        <end position="121"/>
    </location>
</feature>
<feature type="transmembrane region" description="Helical" evidence="2">
    <location>
        <begin position="122"/>
        <end position="140"/>
    </location>
</feature>
<feature type="topological domain" description="Cytoplasmic" evidence="12">
    <location>
        <begin position="141"/>
        <end position="142"/>
    </location>
</feature>
<feature type="transmembrane region" description="Helical" evidence="2">
    <location>
        <begin position="143"/>
        <end position="160"/>
    </location>
</feature>
<feature type="topological domain" description="Lumenal" evidence="12">
    <location>
        <begin position="161"/>
        <end position="171"/>
    </location>
</feature>
<feature type="transmembrane region" description="Helical" evidence="2">
    <location>
        <begin position="172"/>
        <end position="191"/>
    </location>
</feature>
<feature type="topological domain" description="Cytoplasmic" evidence="12">
    <location>
        <begin position="192"/>
        <end position="193"/>
    </location>
</feature>
<feature type="transmembrane region" description="Helical" evidence="2">
    <location>
        <begin position="194"/>
        <end position="208"/>
    </location>
</feature>
<feature type="topological domain" description="Lumenal" evidence="12">
    <location>
        <begin position="209"/>
        <end position="210"/>
    </location>
</feature>
<feature type="transmembrane region" description="Helical" evidence="2">
    <location>
        <begin position="211"/>
        <end position="235"/>
    </location>
</feature>
<feature type="transmembrane region" description="Helical" evidence="2">
    <location>
        <begin position="236"/>
        <end position="261"/>
    </location>
</feature>
<feature type="topological domain" description="Lumenal" evidence="12">
    <location>
        <begin position="262"/>
        <end position="269"/>
    </location>
</feature>
<feature type="transmembrane region" description="Helical" evidence="2">
    <location>
        <begin position="270"/>
        <end position="289"/>
    </location>
</feature>
<feature type="topological domain" description="Cytoplasmic" evidence="12">
    <location>
        <begin position="290"/>
        <end position="299"/>
    </location>
</feature>
<feature type="transmembrane region" description="Helical" evidence="6">
    <location>
        <begin position="300"/>
        <end position="320"/>
    </location>
</feature>
<feature type="topological domain" description="Lumenal" evidence="12">
    <location>
        <begin position="321"/>
        <end position="358"/>
    </location>
</feature>
<feature type="transmembrane region" description="Helical" evidence="2">
    <location>
        <begin position="359"/>
        <end position="381"/>
    </location>
</feature>
<feature type="topological domain" description="Cytoplasmic" evidence="12">
    <location>
        <begin position="382"/>
        <end position="387"/>
    </location>
</feature>
<feature type="transmembrane region" description="Helical" evidence="2">
    <location>
        <begin position="388"/>
        <end position="404"/>
    </location>
</feature>
<feature type="topological domain" description="Lumenal" evidence="12">
    <location>
        <begin position="405"/>
        <end position="408"/>
    </location>
</feature>
<feature type="transmembrane region" description="Helical" evidence="2">
    <location>
        <begin position="409"/>
        <end position="430"/>
    </location>
</feature>
<feature type="topological domain" description="Cytoplasmic" evidence="12">
    <location>
        <begin position="431"/>
        <end position="469"/>
    </location>
</feature>
<feature type="transmembrane region" description="Helical" evidence="2">
    <location>
        <begin position="470"/>
        <end position="495"/>
    </location>
</feature>
<feature type="topological domain" description="Lumenal" evidence="12">
    <location>
        <begin position="496"/>
        <end position="757"/>
    </location>
</feature>
<feature type="region of interest" description="Interacts with target acceptor peptide in protein substrate" evidence="1">
    <location>
        <begin position="547"/>
        <end position="549"/>
    </location>
</feature>
<feature type="region of interest" description="Disordered" evidence="8">
    <location>
        <begin position="721"/>
        <end position="757"/>
    </location>
</feature>
<feature type="short sequence motif" description="DXD motif 1" evidence="4">
    <location>
        <begin position="49"/>
        <end position="51"/>
    </location>
</feature>
<feature type="short sequence motif" description="DXD motif 2" evidence="2">
    <location>
        <begin position="169"/>
        <end position="171"/>
    </location>
</feature>
<feature type="short sequence motif" description="SVSE motif" evidence="4">
    <location>
        <begin position="350"/>
        <end position="353"/>
    </location>
</feature>
<feature type="short sequence motif" description="WWDYG motif" evidence="2">
    <location>
        <begin position="547"/>
        <end position="551"/>
    </location>
</feature>
<feature type="short sequence motif" description="DK motif" evidence="2">
    <location>
        <begin position="614"/>
        <end position="621"/>
    </location>
</feature>
<feature type="compositionally biased region" description="Basic residues" evidence="8">
    <location>
        <begin position="734"/>
        <end position="747"/>
    </location>
</feature>
<feature type="binding site" evidence="1">
    <location>
        <position position="51"/>
    </location>
    <ligand>
        <name>Mn(2+)</name>
        <dbReference type="ChEBI" id="CHEBI:29035"/>
    </ligand>
</feature>
<feature type="binding site" evidence="1">
    <location>
        <position position="169"/>
    </location>
    <ligand>
        <name>Mn(2+)</name>
        <dbReference type="ChEBI" id="CHEBI:29035"/>
    </ligand>
</feature>
<feature type="binding site" evidence="1">
    <location>
        <position position="171"/>
    </location>
    <ligand>
        <name>Mn(2+)</name>
        <dbReference type="ChEBI" id="CHEBI:29035"/>
    </ligand>
</feature>
<feature type="binding site" evidence="1">
    <location>
        <position position="407"/>
    </location>
    <ligand>
        <name>dolichyl diphosphooligosaccharide</name>
        <dbReference type="ChEBI" id="CHEBI:57570"/>
    </ligand>
</feature>
<feature type="binding site" evidence="1">
    <location>
        <position position="552"/>
    </location>
    <ligand>
        <name>dolichyl diphosphooligosaccharide</name>
        <dbReference type="ChEBI" id="CHEBI:57570"/>
    </ligand>
</feature>
<feature type="site" description="Interacts with target acceptor peptide in protein substrate" evidence="1">
    <location>
        <position position="51"/>
    </location>
</feature>
<feature type="site" description="Important for catalytic activity" evidence="1">
    <location>
        <position position="162"/>
    </location>
</feature>
<feature type="site" description="Interacts with target acceptor peptide in protein substrate" evidence="1">
    <location>
        <position position="353"/>
    </location>
</feature>
<feature type="site" description="Interacts with target acceptor peptide in protein substrate" evidence="1">
    <location>
        <position position="617"/>
    </location>
</feature>
<feature type="glycosylation site" description="N-linked (GlcNAc...) asparagine" evidence="9 10">
    <location>
        <position position="559"/>
    </location>
</feature>
<feature type="glycosylation site" description="N-linked (GlcNAc...) asparagine" evidence="7">
    <location>
        <position position="566"/>
    </location>
</feature>
<feature type="glycosylation site" description="N-linked (GlcNAc...) (high mannose) asparagine" evidence="9 10">
    <location>
        <position position="570"/>
    </location>
</feature>
<feature type="glycosylation site" description="N-linked (GlcNAc...) asparagine" evidence="7">
    <location>
        <position position="584"/>
    </location>
</feature>
<sequence>MTSTTAARTASSRVGATTLLTIVVLALAWFVGFASRLFAIVRFESIIHEFDPWFNYRATHHMVQHGFYKFLNWFDERAWYPLGRIVGGTVYPGLMVTSGLIHWILDSLNFHVHIREVCVFLAPTFSGLTAIATYLLTKELWSPGAGLFAACFIAISPGYTSRSVAGSYDNEGIAIFALQFTYYLWVKSLKTGSIMWASLCALSYFYMVSAWGGYVFIINLIPLHALALIIMGRYSSRLFVSYTSFYCLATILSMQVPFVGFQPVRTSEHMPAFGVFGLLQIVALMHYARNRITRQQFMTLFVGGLTILGALSVVVYFALVWGGYVAPFSGRFYSLWDTGYAKIHIPIIASVSEHQPTTWVSFFFDLHITAAVFPVGLWYCIKKVNDERVFIILYAVSAVYFAGVMVRLMLTLTPAVCVLAGIGFSYTFEKYLKDEETKERSSSQSGTTKDEKLYDKAAKNVKSRNANDGDESGVSSNVRTIISIILVIFLLMFVVHATYVTSNAYSHPSVVLQSSTNNGDRIIMDDFREAYHWLRENTADDARVMSWWDYGYQIAGMANRTTLVDNNTWNNSHIALVGKAMSSNESAAYEIMTELDVDYILVIFGGVIGYSGDDINKFLWMVRIAQGEHPKDIREENYFTSTGEYSTGAGASETMLNCLMYKMSYYRFGETRVGYNQAGGFDRTRGYVIGKKDITLEYIEEAYTTENWLVRIYKRKKLPNRPTVKSEEATIPIKGKKATQGKNKKGVIRPAPTASKA</sequence>